<name>IF2_SHIF8</name>
<proteinExistence type="inferred from homology"/>
<evidence type="ECO:0000250" key="1"/>
<evidence type="ECO:0000255" key="2">
    <source>
        <dbReference type="HAMAP-Rule" id="MF_00100"/>
    </source>
</evidence>
<evidence type="ECO:0000256" key="3">
    <source>
        <dbReference type="SAM" id="MobiDB-lite"/>
    </source>
</evidence>
<organism>
    <name type="scientific">Shigella flexneri serotype 5b (strain 8401)</name>
    <dbReference type="NCBI Taxonomy" id="373384"/>
    <lineage>
        <taxon>Bacteria</taxon>
        <taxon>Pseudomonadati</taxon>
        <taxon>Pseudomonadota</taxon>
        <taxon>Gammaproteobacteria</taxon>
        <taxon>Enterobacterales</taxon>
        <taxon>Enterobacteriaceae</taxon>
        <taxon>Shigella</taxon>
    </lineage>
</organism>
<gene>
    <name evidence="2" type="primary">infB</name>
    <name type="ordered locus">SFV_3198</name>
</gene>
<keyword id="KW-0007">Acetylation</keyword>
<keyword id="KW-0963">Cytoplasm</keyword>
<keyword id="KW-0342">GTP-binding</keyword>
<keyword id="KW-0396">Initiation factor</keyword>
<keyword id="KW-0547">Nucleotide-binding</keyword>
<keyword id="KW-0648">Protein biosynthesis</keyword>
<sequence>MTDVTIKTLAAERQTSVERLVQQFADAGIRKSADDSVSAQEKQTLIDHLNQKNSGPDKLTLQRKTRSTLNIPGTGGKSKSVQIEVRKKRTFVKRDPQEAERLAAEEQARREAEESAKREAQQKAEREAAEQAKREAAEQAKREAAEKDKVSNQQDDMTKNAQAEKARREQEAAELKRKAEEEARRKLEEEARRVAEEARRMAEENKWTDNAEPTEDSSDYHVTTSQHARQAEDESDREVEGGRGRGRNAKAARPKKGNKHAESKADREEARAAVRGGKGGKRKGSSLQQGFQKPAQVVNRDVVIGETITVGELANKMAVKGSQVIKAMMKLGAMATINQVIDQETAQLVAEEMGHKVILRRENELEEAVMSDRDTGAAAEPRAPVVTIMGHVDHGKTSLLDYIRSTKVASGEAGGITQHIGAYHVETENGMITFLDTPGHAAFTSMRARGAQATDIVVLVVAADDGVMPQTIEAIQHAKAAQVPVVVAVNKIDKPEADPDRVKNELSQYGILPEEWGGESQFVHVSAKAGTGIDELLDAILLQAEVLELKAVRKGMASGAVIESFLDKGRGPVATVLVREGTLHKGDIVLCGFEYGRVRAMRNELGQEVLEAGPSIPVEILGLSGVPAAGDEVTVVRDEKKAREVALYRQGKFREVKLARQQKSKLENMFANMTEGEVHEVNIVLKADVQGSVEAISDSLLKLSTDEVKVKIIGSGVGGITETDATLAAASNAILVGFNVRADASARKVIEAESLDLRYYSVIYNLIDEVKAAMSGMLSPELKQQIIGLAEVRDVFKSPKFGAIAGCMVTEGVVKRHNPIRVLRDNVVIYEGELESLRRFKDDVNEVRNGMECGIGVKNYNDVRTGDVIEVFEIIEIQRTIA</sequence>
<feature type="chain" id="PRO_1000008338" description="Translation initiation factor IF-2">
    <location>
        <begin position="1"/>
        <end position="882"/>
    </location>
</feature>
<feature type="domain" description="tr-type G">
    <location>
        <begin position="381"/>
        <end position="550"/>
    </location>
</feature>
<feature type="region of interest" description="Disordered" evidence="3">
    <location>
        <begin position="28"/>
        <end position="294"/>
    </location>
</feature>
<feature type="region of interest" description="G1" evidence="1">
    <location>
        <begin position="390"/>
        <end position="397"/>
    </location>
</feature>
<feature type="region of interest" description="G2" evidence="1">
    <location>
        <begin position="415"/>
        <end position="419"/>
    </location>
</feature>
<feature type="region of interest" description="G3" evidence="1">
    <location>
        <begin position="436"/>
        <end position="439"/>
    </location>
</feature>
<feature type="region of interest" description="G4" evidence="1">
    <location>
        <begin position="490"/>
        <end position="493"/>
    </location>
</feature>
<feature type="region of interest" description="G5" evidence="1">
    <location>
        <begin position="526"/>
        <end position="528"/>
    </location>
</feature>
<feature type="compositionally biased region" description="Polar residues" evidence="3">
    <location>
        <begin position="67"/>
        <end position="81"/>
    </location>
</feature>
<feature type="compositionally biased region" description="Basic and acidic residues" evidence="3">
    <location>
        <begin position="92"/>
        <end position="209"/>
    </location>
</feature>
<feature type="compositionally biased region" description="Basic residues" evidence="3">
    <location>
        <begin position="244"/>
        <end position="258"/>
    </location>
</feature>
<feature type="compositionally biased region" description="Basic and acidic residues" evidence="3">
    <location>
        <begin position="259"/>
        <end position="272"/>
    </location>
</feature>
<feature type="binding site" evidence="2">
    <location>
        <begin position="390"/>
        <end position="397"/>
    </location>
    <ligand>
        <name>GTP</name>
        <dbReference type="ChEBI" id="CHEBI:37565"/>
    </ligand>
</feature>
<feature type="binding site" evidence="2">
    <location>
        <begin position="436"/>
        <end position="440"/>
    </location>
    <ligand>
        <name>GTP</name>
        <dbReference type="ChEBI" id="CHEBI:37565"/>
    </ligand>
</feature>
<feature type="binding site" evidence="2">
    <location>
        <begin position="490"/>
        <end position="493"/>
    </location>
    <ligand>
        <name>GTP</name>
        <dbReference type="ChEBI" id="CHEBI:37565"/>
    </ligand>
</feature>
<feature type="modified residue" description="N6-acetyllysine" evidence="1">
    <location>
        <position position="800"/>
    </location>
</feature>
<comment type="function">
    <text evidence="2">One of the essential components for the initiation of protein synthesis. Protects formylmethionyl-tRNA from spontaneous hydrolysis and promotes its binding to the 30S ribosomal subunits. Also involved in the hydrolysis of GTP during the formation of the 70S ribosomal complex.</text>
</comment>
<comment type="subcellular location">
    <subcellularLocation>
        <location evidence="2">Cytoplasm</location>
    </subcellularLocation>
</comment>
<comment type="similarity">
    <text evidence="2">Belongs to the TRAFAC class translation factor GTPase superfamily. Classic translation factor GTPase family. IF-2 subfamily.</text>
</comment>
<protein>
    <recommendedName>
        <fullName evidence="2">Translation initiation factor IF-2</fullName>
    </recommendedName>
</protein>
<accession>Q0T0B3</accession>
<dbReference type="EMBL" id="CP000266">
    <property type="protein sequence ID" value="ABF05252.1"/>
    <property type="molecule type" value="Genomic_DNA"/>
</dbReference>
<dbReference type="RefSeq" id="WP_000133056.1">
    <property type="nucleotide sequence ID" value="NC_008258.1"/>
</dbReference>
<dbReference type="SMR" id="Q0T0B3"/>
<dbReference type="KEGG" id="sfv:SFV_3198"/>
<dbReference type="HOGENOM" id="CLU_006301_6_3_6"/>
<dbReference type="Proteomes" id="UP000000659">
    <property type="component" value="Chromosome"/>
</dbReference>
<dbReference type="GO" id="GO:0005829">
    <property type="term" value="C:cytosol"/>
    <property type="evidence" value="ECO:0007669"/>
    <property type="project" value="TreeGrafter"/>
</dbReference>
<dbReference type="GO" id="GO:0005525">
    <property type="term" value="F:GTP binding"/>
    <property type="evidence" value="ECO:0007669"/>
    <property type="project" value="UniProtKB-KW"/>
</dbReference>
<dbReference type="GO" id="GO:0003924">
    <property type="term" value="F:GTPase activity"/>
    <property type="evidence" value="ECO:0007669"/>
    <property type="project" value="UniProtKB-UniRule"/>
</dbReference>
<dbReference type="GO" id="GO:0097216">
    <property type="term" value="F:guanosine tetraphosphate binding"/>
    <property type="evidence" value="ECO:0007669"/>
    <property type="project" value="UniProtKB-ARBA"/>
</dbReference>
<dbReference type="GO" id="GO:0003743">
    <property type="term" value="F:translation initiation factor activity"/>
    <property type="evidence" value="ECO:0007669"/>
    <property type="project" value="UniProtKB-UniRule"/>
</dbReference>
<dbReference type="CDD" id="cd01887">
    <property type="entry name" value="IF2_eIF5B"/>
    <property type="match status" value="1"/>
</dbReference>
<dbReference type="CDD" id="cd03702">
    <property type="entry name" value="IF2_mtIF2_II"/>
    <property type="match status" value="1"/>
</dbReference>
<dbReference type="CDD" id="cd03692">
    <property type="entry name" value="mtIF2_IVc"/>
    <property type="match status" value="1"/>
</dbReference>
<dbReference type="FunFam" id="2.40.30.10:FF:000007">
    <property type="entry name" value="Translation initiation factor IF-2"/>
    <property type="match status" value="1"/>
</dbReference>
<dbReference type="FunFam" id="2.40.30.10:FF:000008">
    <property type="entry name" value="Translation initiation factor IF-2"/>
    <property type="match status" value="1"/>
</dbReference>
<dbReference type="FunFam" id="3.30.56.50:FF:000001">
    <property type="entry name" value="Translation initiation factor IF-2"/>
    <property type="match status" value="1"/>
</dbReference>
<dbReference type="FunFam" id="3.40.50.10050:FF:000001">
    <property type="entry name" value="Translation initiation factor IF-2"/>
    <property type="match status" value="1"/>
</dbReference>
<dbReference type="FunFam" id="3.40.50.300:FF:000019">
    <property type="entry name" value="Translation initiation factor IF-2"/>
    <property type="match status" value="1"/>
</dbReference>
<dbReference type="Gene3D" id="3.40.50.300">
    <property type="entry name" value="P-loop containing nucleotide triphosphate hydrolases"/>
    <property type="match status" value="1"/>
</dbReference>
<dbReference type="Gene3D" id="3.30.56.50">
    <property type="entry name" value="Putative DNA-binding domain, N-terminal subdomain of bacterial translation initiation factor IF2"/>
    <property type="match status" value="1"/>
</dbReference>
<dbReference type="Gene3D" id="2.40.30.10">
    <property type="entry name" value="Translation factors"/>
    <property type="match status" value="2"/>
</dbReference>
<dbReference type="Gene3D" id="3.40.50.10050">
    <property type="entry name" value="Translation initiation factor IF- 2, domain 3"/>
    <property type="match status" value="1"/>
</dbReference>
<dbReference type="HAMAP" id="MF_00100_B">
    <property type="entry name" value="IF_2_B"/>
    <property type="match status" value="1"/>
</dbReference>
<dbReference type="InterPro" id="IPR009061">
    <property type="entry name" value="DNA-bd_dom_put_sf"/>
</dbReference>
<dbReference type="InterPro" id="IPR053905">
    <property type="entry name" value="EF-G-like_DII"/>
</dbReference>
<dbReference type="InterPro" id="IPR004161">
    <property type="entry name" value="EFTu-like_2"/>
</dbReference>
<dbReference type="InterPro" id="IPR013575">
    <property type="entry name" value="IF2_assoc_dom_bac"/>
</dbReference>
<dbReference type="InterPro" id="IPR044145">
    <property type="entry name" value="IF2_II"/>
</dbReference>
<dbReference type="InterPro" id="IPR006847">
    <property type="entry name" value="IF2_N"/>
</dbReference>
<dbReference type="InterPro" id="IPR027417">
    <property type="entry name" value="P-loop_NTPase"/>
</dbReference>
<dbReference type="InterPro" id="IPR005225">
    <property type="entry name" value="Small_GTP-bd"/>
</dbReference>
<dbReference type="InterPro" id="IPR000795">
    <property type="entry name" value="T_Tr_GTP-bd_dom"/>
</dbReference>
<dbReference type="InterPro" id="IPR000178">
    <property type="entry name" value="TF_IF2_bacterial-like"/>
</dbReference>
<dbReference type="InterPro" id="IPR015760">
    <property type="entry name" value="TIF_IF2"/>
</dbReference>
<dbReference type="InterPro" id="IPR023115">
    <property type="entry name" value="TIF_IF2_dom3"/>
</dbReference>
<dbReference type="InterPro" id="IPR036925">
    <property type="entry name" value="TIF_IF2_dom3_sf"/>
</dbReference>
<dbReference type="InterPro" id="IPR009000">
    <property type="entry name" value="Transl_B-barrel_sf"/>
</dbReference>
<dbReference type="NCBIfam" id="TIGR00487">
    <property type="entry name" value="IF-2"/>
    <property type="match status" value="1"/>
</dbReference>
<dbReference type="NCBIfam" id="TIGR00231">
    <property type="entry name" value="small_GTP"/>
    <property type="match status" value="1"/>
</dbReference>
<dbReference type="PANTHER" id="PTHR43381:SF5">
    <property type="entry name" value="TR-TYPE G DOMAIN-CONTAINING PROTEIN"/>
    <property type="match status" value="1"/>
</dbReference>
<dbReference type="PANTHER" id="PTHR43381">
    <property type="entry name" value="TRANSLATION INITIATION FACTOR IF-2-RELATED"/>
    <property type="match status" value="1"/>
</dbReference>
<dbReference type="Pfam" id="PF22042">
    <property type="entry name" value="EF-G_D2"/>
    <property type="match status" value="1"/>
</dbReference>
<dbReference type="Pfam" id="PF00009">
    <property type="entry name" value="GTP_EFTU"/>
    <property type="match status" value="1"/>
</dbReference>
<dbReference type="Pfam" id="PF03144">
    <property type="entry name" value="GTP_EFTU_D2"/>
    <property type="match status" value="1"/>
</dbReference>
<dbReference type="Pfam" id="PF11987">
    <property type="entry name" value="IF-2"/>
    <property type="match status" value="1"/>
</dbReference>
<dbReference type="Pfam" id="PF08364">
    <property type="entry name" value="IF2_assoc"/>
    <property type="match status" value="1"/>
</dbReference>
<dbReference type="Pfam" id="PF04760">
    <property type="entry name" value="IF2_N"/>
    <property type="match status" value="2"/>
</dbReference>
<dbReference type="SUPFAM" id="SSF52156">
    <property type="entry name" value="Initiation factor IF2/eIF5b, domain 3"/>
    <property type="match status" value="1"/>
</dbReference>
<dbReference type="SUPFAM" id="SSF52540">
    <property type="entry name" value="P-loop containing nucleoside triphosphate hydrolases"/>
    <property type="match status" value="1"/>
</dbReference>
<dbReference type="SUPFAM" id="SSF46955">
    <property type="entry name" value="Putative DNA-binding domain"/>
    <property type="match status" value="1"/>
</dbReference>
<dbReference type="SUPFAM" id="SSF50447">
    <property type="entry name" value="Translation proteins"/>
    <property type="match status" value="2"/>
</dbReference>
<dbReference type="PROSITE" id="PS51722">
    <property type="entry name" value="G_TR_2"/>
    <property type="match status" value="1"/>
</dbReference>
<dbReference type="PROSITE" id="PS01176">
    <property type="entry name" value="IF2"/>
    <property type="match status" value="1"/>
</dbReference>
<reference key="1">
    <citation type="journal article" date="2006" name="BMC Genomics">
        <title>Complete genome sequence of Shigella flexneri 5b and comparison with Shigella flexneri 2a.</title>
        <authorList>
            <person name="Nie H."/>
            <person name="Yang F."/>
            <person name="Zhang X."/>
            <person name="Yang J."/>
            <person name="Chen L."/>
            <person name="Wang J."/>
            <person name="Xiong Z."/>
            <person name="Peng J."/>
            <person name="Sun L."/>
            <person name="Dong J."/>
            <person name="Xue Y."/>
            <person name="Xu X."/>
            <person name="Chen S."/>
            <person name="Yao Z."/>
            <person name="Shen Y."/>
            <person name="Jin Q."/>
        </authorList>
    </citation>
    <scope>NUCLEOTIDE SEQUENCE [LARGE SCALE GENOMIC DNA]</scope>
    <source>
        <strain>8401</strain>
    </source>
</reference>